<keyword id="KW-0002">3D-structure</keyword>
<keyword id="KW-0119">Carbohydrate metabolism</keyword>
<keyword id="KW-0170">Cobalt</keyword>
<keyword id="KW-0413">Isomerase</keyword>
<keyword id="KW-0460">Magnesium</keyword>
<keyword id="KW-0464">Manganese</keyword>
<keyword id="KW-0479">Metal-binding</keyword>
<comment type="function">
    <text evidence="3 4">Catalyzes the reversible C-3 epimerization of several ketoses. Shows the highest enzymatic activity for the epimerization of L-ribulose to L-xylulose. Is also able to convert D-allulose (also known as D-psicose) to D-fructose and, to a lesser extent, L-tagatose to L-sorbose, D-ribulose to D-xylulose, L-allulose to L-fructose and D-tagatose to D-sorbose.</text>
</comment>
<comment type="catalytic activity">
    <reaction evidence="4">
        <text>L-ribulose = L-xylulose</text>
        <dbReference type="Rhea" id="RHEA:53268"/>
        <dbReference type="ChEBI" id="CHEBI:16880"/>
        <dbReference type="ChEBI" id="CHEBI:17399"/>
    </reaction>
</comment>
<comment type="catalytic activity">
    <reaction evidence="3 4">
        <text>D-allulose = keto-D-fructose</text>
        <dbReference type="Rhea" id="RHEA:42360"/>
        <dbReference type="ChEBI" id="CHEBI:27605"/>
        <dbReference type="ChEBI" id="CHEBI:48095"/>
    </reaction>
</comment>
<comment type="catalytic activity">
    <reaction evidence="3">
        <text>keto-L-tagatose = keto-L-sorbose</text>
        <dbReference type="Rhea" id="RHEA:61780"/>
        <dbReference type="ChEBI" id="CHEBI:13172"/>
        <dbReference type="ChEBI" id="CHEBI:134275"/>
    </reaction>
</comment>
<comment type="catalytic activity">
    <reaction evidence="4">
        <text>D-ribulose = D-xylulose</text>
        <dbReference type="Rhea" id="RHEA:51544"/>
        <dbReference type="ChEBI" id="CHEBI:17140"/>
        <dbReference type="ChEBI" id="CHEBI:17173"/>
    </reaction>
</comment>
<comment type="catalytic activity">
    <reaction evidence="3">
        <text>L-allulose = keto-L-fructose</text>
        <dbReference type="Rhea" id="RHEA:61784"/>
        <dbReference type="ChEBI" id="CHEBI:37724"/>
        <dbReference type="ChEBI" id="CHEBI:145026"/>
    </reaction>
</comment>
<comment type="catalytic activity">
    <reaction evidence="3">
        <text>keto-D-tagatose = keto-D-sorbose</text>
        <dbReference type="Rhea" id="RHEA:43048"/>
        <dbReference type="ChEBI" id="CHEBI:13022"/>
        <dbReference type="ChEBI" id="CHEBI:47693"/>
    </reaction>
</comment>
<comment type="cofactor">
    <cofactor evidence="3">
        <name>Mg(2+)</name>
        <dbReference type="ChEBI" id="CHEBI:18420"/>
    </cofactor>
    <cofactor evidence="3 4">
        <name>Mn(2+)</name>
        <dbReference type="ChEBI" id="CHEBI:29035"/>
    </cofactor>
    <cofactor evidence="3">
        <name>Co(2+)</name>
        <dbReference type="ChEBI" id="CHEBI:48828"/>
    </cofactor>
    <text evidence="3 4">Binds 1 divalent metal cation per subunit. Seems able to use Mg(2+), Mn(2+) or Co(2+).</text>
</comment>
<comment type="biophysicochemical properties">
    <kinetics>
        <KM evidence="3">31 mM for D-allulose</KM>
        <KM evidence="3">37.5 mM for D-fructose</KM>
        <Vmax evidence="3">177.0 umol/min/mg enzyme for the epimerization of D-allulose</Vmax>
        <Vmax evidence="3">78.4 umol/min/mg enzyme for the epimerization of D-fructose</Vmax>
        <text evidence="3">kcat is 5664 min(-1) for the epimerization of D-allulose. kcat is 2509 min(-1) for the epimerization of D-fructose.</text>
    </kinetics>
    <phDependence>
        <text evidence="3">Optimum pH is 7.5-8.0. Is stable from pH 6.0-11.0.</text>
    </phDependence>
    <temperatureDependence>
        <text evidence="3">Optimum temperature is 70 degrees Celsius. Is highly stable at 55 degrees Celsius.</text>
    </temperatureDependence>
</comment>
<comment type="subunit">
    <text evidence="3">Homotetramer.</text>
</comment>
<comment type="biotechnology">
    <text evidence="3">This enzyme is an ideal candidate for the industrial production of D-allulose, which has the potential to be used not only as a food ingredient but also as a growth regulator and/or agricultural chemical.</text>
</comment>
<comment type="similarity">
    <text evidence="7">Belongs to the hyi family.</text>
</comment>
<feature type="chain" id="PRO_0000448614" description="Ketose 3-epimerase">
    <location>
        <begin position="1"/>
        <end position="289"/>
    </location>
</feature>
<feature type="active site" description="Proton donor/acceptor" evidence="2">
    <location>
        <position position="146"/>
    </location>
</feature>
<feature type="active site" description="Proton donor/acceptor" evidence="2">
    <location>
        <position position="240"/>
    </location>
</feature>
<feature type="binding site" evidence="4">
    <location>
        <position position="146"/>
    </location>
    <ligand>
        <name>Mn(2+)</name>
        <dbReference type="ChEBI" id="CHEBI:29035"/>
    </ligand>
</feature>
<feature type="binding site" evidence="1">
    <location>
        <position position="152"/>
    </location>
    <ligand>
        <name>substrate</name>
    </ligand>
</feature>
<feature type="binding site" evidence="1">
    <location>
        <begin position="179"/>
        <end position="182"/>
    </location>
    <ligand>
        <name>substrate</name>
    </ligand>
</feature>
<feature type="binding site" evidence="4">
    <location>
        <position position="179"/>
    </location>
    <ligand>
        <name>Mn(2+)</name>
        <dbReference type="ChEBI" id="CHEBI:29035"/>
    </ligand>
</feature>
<feature type="binding site" evidence="4">
    <location>
        <position position="205"/>
    </location>
    <ligand>
        <name>Mn(2+)</name>
        <dbReference type="ChEBI" id="CHEBI:29035"/>
    </ligand>
</feature>
<feature type="binding site" evidence="1">
    <location>
        <position position="211"/>
    </location>
    <ligand>
        <name>substrate</name>
    </ligand>
</feature>
<feature type="binding site" evidence="4">
    <location>
        <position position="240"/>
    </location>
    <ligand>
        <name>Mn(2+)</name>
        <dbReference type="ChEBI" id="CHEBI:29035"/>
    </ligand>
</feature>
<feature type="strand" evidence="10">
    <location>
        <begin position="3"/>
        <end position="6"/>
    </location>
</feature>
<feature type="helix" evidence="10">
    <location>
        <begin position="7"/>
        <end position="9"/>
    </location>
</feature>
<feature type="helix" evidence="10">
    <location>
        <begin position="16"/>
        <end position="29"/>
    </location>
</feature>
<feature type="strand" evidence="10">
    <location>
        <begin position="32"/>
        <end position="37"/>
    </location>
</feature>
<feature type="helix" evidence="10">
    <location>
        <begin position="41"/>
        <end position="43"/>
    </location>
</feature>
<feature type="helix" evidence="10">
    <location>
        <begin position="46"/>
        <end position="56"/>
    </location>
</feature>
<feature type="strand" evidence="10">
    <location>
        <begin position="59"/>
        <end position="66"/>
    </location>
</feature>
<feature type="helix" evidence="10">
    <location>
        <begin position="68"/>
        <end position="70"/>
    </location>
</feature>
<feature type="helix" evidence="10">
    <location>
        <begin position="77"/>
        <end position="97"/>
    </location>
</feature>
<feature type="strand" evidence="10">
    <location>
        <begin position="101"/>
        <end position="111"/>
    </location>
</feature>
<feature type="helix" evidence="10">
    <location>
        <begin position="119"/>
        <end position="137"/>
    </location>
</feature>
<feature type="turn" evidence="10">
    <location>
        <begin position="138"/>
        <end position="140"/>
    </location>
</feature>
<feature type="strand" evidence="10">
    <location>
        <begin position="142"/>
        <end position="146"/>
    </location>
</feature>
<feature type="turn" evidence="10">
    <location>
        <begin position="150"/>
        <end position="152"/>
    </location>
</feature>
<feature type="helix" evidence="10">
    <location>
        <begin position="159"/>
        <end position="169"/>
    </location>
</feature>
<feature type="strand" evidence="10">
    <location>
        <begin position="174"/>
        <end position="179"/>
    </location>
</feature>
<feature type="helix" evidence="10">
    <location>
        <begin position="180"/>
        <end position="186"/>
    </location>
</feature>
<feature type="helix" evidence="10">
    <location>
        <begin position="192"/>
        <end position="197"/>
    </location>
</feature>
<feature type="helix" evidence="10">
    <location>
        <begin position="198"/>
        <end position="200"/>
    </location>
</feature>
<feature type="strand" evidence="10">
    <location>
        <begin position="201"/>
        <end position="206"/>
    </location>
</feature>
<feature type="strand" evidence="10">
    <location>
        <begin position="211"/>
        <end position="213"/>
    </location>
</feature>
<feature type="strand" evidence="10">
    <location>
        <begin position="216"/>
        <end position="218"/>
    </location>
</feature>
<feature type="helix" evidence="10">
    <location>
        <begin position="221"/>
        <end position="231"/>
    </location>
</feature>
<feature type="strand" evidence="10">
    <location>
        <begin position="237"/>
        <end position="239"/>
    </location>
</feature>
<feature type="helix" evidence="10">
    <location>
        <begin position="251"/>
        <end position="254"/>
    </location>
</feature>
<feature type="helix" evidence="10">
    <location>
        <begin position="265"/>
        <end position="289"/>
    </location>
</feature>
<name>KET3E_ARTGO</name>
<accession>A0A1L7NQ96</accession>
<sequence length="289" mass="31406">MKIGCHGLVWTGHFDAEGIRYSVQKTREAGFDLVEFPLMDPFSFDVQTAKSALAEHGLAASASLGLSDATDVSSEDPAVVKAGEELLNRAVDVLAELGATDFCGVIYSAMKKYMEPATAAGLANSKAAVGRVADRASDLGINVSLEVVNRYETNVLNTGRQALAYLEELNRPNLGIHLDTYHMNIEESDMFSPILDTAEALRYVHIGESHRGYLGTGSVDFDTFFKALGRIGYDGPVVFESFSSSVVAPDLSRMLGIWRNLWADNEELGAHANAFIRDKLTAIKTIELH</sequence>
<proteinExistence type="evidence at protein level"/>
<reference key="1">
    <citation type="journal article" date="2017" name="J. Biosci. Bioeng.">
        <title>Purification and characterization of D-allulose 3-epimerase derived from Arthrobacter globiformis M30, a GRAS microorganism.</title>
        <authorList>
            <person name="Yoshihara A."/>
            <person name="Kozakai T."/>
            <person name="Shintani T."/>
            <person name="Matsutani R."/>
            <person name="Ohtani K."/>
            <person name="Iida T."/>
            <person name="Akimitsu K."/>
            <person name="Izumori K."/>
            <person name="Gullapalli P.K."/>
        </authorList>
    </citation>
    <scope>NUCLEOTIDE SEQUENCE [GENOMIC DNA]</scope>
    <scope>FUNCTION</scope>
    <scope>CATALYTIC ACTIVITY</scope>
    <scope>BIOPHYSICOCHEMICAL PROPERTIES</scope>
    <scope>SUBSTRATE SPECIFICITY</scope>
    <scope>COFACTOR</scope>
    <scope>SUBUNIT</scope>
    <scope>BIOTECHNOLOGY</scope>
    <source>
        <strain>M30</strain>
    </source>
</reference>
<reference evidence="9" key="2">
    <citation type="journal article" date="2018" name="Acta Crystallogr. F Struct. Biol. Commun.">
        <title>X-ray structure of Arthrobacter globiformis M30 ketose 3-epimerase for the production of D-allulose from D-fructose.</title>
        <authorList>
            <person name="Yoshida H."/>
            <person name="Yoshihara A."/>
            <person name="Gullapalli P.K."/>
            <person name="Ohtani K."/>
            <person name="Akimitsu K."/>
            <person name="Izumori K."/>
            <person name="Kamitori S."/>
        </authorList>
    </citation>
    <scope>X-RAY CRYSTALLOGRAPHY (1.96 ANGSTROMS) IN COMPLEX WITH MANGANESE</scope>
    <scope>FUNCTION</scope>
    <scope>CATALYTIC ACTIVITY</scope>
    <scope>SUBSTRATE SPECIFICITY</scope>
    <scope>COFACTOR</scope>
    <source>
        <strain>M30</strain>
    </source>
</reference>
<evidence type="ECO:0000250" key="1">
    <source>
        <dbReference type="UniProtKB" id="O50580"/>
    </source>
</evidence>
<evidence type="ECO:0000250" key="2">
    <source>
        <dbReference type="UniProtKB" id="Q9WYP7"/>
    </source>
</evidence>
<evidence type="ECO:0000269" key="3">
    <source>
    </source>
</evidence>
<evidence type="ECO:0000269" key="4">
    <source>
    </source>
</evidence>
<evidence type="ECO:0000303" key="5">
    <source>
    </source>
</evidence>
<evidence type="ECO:0000303" key="6">
    <source>
    </source>
</evidence>
<evidence type="ECO:0000305" key="7"/>
<evidence type="ECO:0000312" key="8">
    <source>
        <dbReference type="EMBL" id="BAW27657.1"/>
    </source>
</evidence>
<evidence type="ECO:0007744" key="9">
    <source>
        <dbReference type="PDB" id="5ZFS"/>
    </source>
</evidence>
<evidence type="ECO:0007829" key="10">
    <source>
        <dbReference type="PDB" id="5ZFS"/>
    </source>
</evidence>
<dbReference type="EC" id="5.1.3.-" evidence="3 4"/>
<dbReference type="EMBL" id="AB981957">
    <property type="protein sequence ID" value="BAW27657.1"/>
    <property type="molecule type" value="Genomic_DNA"/>
</dbReference>
<dbReference type="PDB" id="5ZFS">
    <property type="method" value="X-ray"/>
    <property type="resolution" value="1.96 A"/>
    <property type="chains" value="A/B=1-289"/>
</dbReference>
<dbReference type="PDB" id="8YEB">
    <property type="method" value="X-ray"/>
    <property type="resolution" value="2.20 A"/>
    <property type="chains" value="A/B/C/D/E/F/G/H/I/J/K/L/M/N/O/P=1-289"/>
</dbReference>
<dbReference type="PDB" id="8YEC">
    <property type="method" value="X-ray"/>
    <property type="resolution" value="2.50 A"/>
    <property type="chains" value="A/B/C/D/E/F/G/H/I/J/K/L/M/N/O/P=1-289"/>
</dbReference>
<dbReference type="PDBsum" id="5ZFS"/>
<dbReference type="PDBsum" id="8YEB"/>
<dbReference type="PDBsum" id="8YEC"/>
<dbReference type="SMR" id="A0A1L7NQ96"/>
<dbReference type="GO" id="GO:0030145">
    <property type="term" value="F:manganese ion binding"/>
    <property type="evidence" value="ECO:0000314"/>
    <property type="project" value="UniProtKB"/>
</dbReference>
<dbReference type="GO" id="GO:0016857">
    <property type="term" value="F:racemase and epimerase activity, acting on carbohydrates and derivatives"/>
    <property type="evidence" value="ECO:0000314"/>
    <property type="project" value="UniProtKB"/>
</dbReference>
<dbReference type="GO" id="GO:0005975">
    <property type="term" value="P:carbohydrate metabolic process"/>
    <property type="evidence" value="ECO:0000314"/>
    <property type="project" value="UniProtKB"/>
</dbReference>
<dbReference type="Gene3D" id="3.20.20.150">
    <property type="entry name" value="Divalent-metal-dependent TIM barrel enzymes"/>
    <property type="match status" value="1"/>
</dbReference>
<dbReference type="InterPro" id="IPR050312">
    <property type="entry name" value="IolE/XylAMocC-like"/>
</dbReference>
<dbReference type="InterPro" id="IPR036237">
    <property type="entry name" value="Xyl_isomerase-like_sf"/>
</dbReference>
<dbReference type="InterPro" id="IPR013022">
    <property type="entry name" value="Xyl_isomerase-like_TIM-brl"/>
</dbReference>
<dbReference type="PANTHER" id="PTHR12110">
    <property type="entry name" value="HYDROXYPYRUVATE ISOMERASE"/>
    <property type="match status" value="1"/>
</dbReference>
<dbReference type="PANTHER" id="PTHR12110:SF41">
    <property type="entry name" value="INOSOSE DEHYDRATASE"/>
    <property type="match status" value="1"/>
</dbReference>
<dbReference type="Pfam" id="PF01261">
    <property type="entry name" value="AP_endonuc_2"/>
    <property type="match status" value="1"/>
</dbReference>
<dbReference type="SUPFAM" id="SSF51658">
    <property type="entry name" value="Xylose isomerase-like"/>
    <property type="match status" value="1"/>
</dbReference>
<organism>
    <name type="scientific">Arthrobacter globiformis</name>
    <dbReference type="NCBI Taxonomy" id="1665"/>
    <lineage>
        <taxon>Bacteria</taxon>
        <taxon>Bacillati</taxon>
        <taxon>Actinomycetota</taxon>
        <taxon>Actinomycetes</taxon>
        <taxon>Micrococcales</taxon>
        <taxon>Micrococcaceae</taxon>
        <taxon>Arthrobacter</taxon>
    </lineage>
</organism>
<gene>
    <name evidence="8" type="primary">DAE</name>
</gene>
<protein>
    <recommendedName>
        <fullName evidence="6">Ketose 3-epimerase</fullName>
        <ecNumber evidence="3 4">5.1.3.-</ecNumber>
    </recommendedName>
    <alternativeName>
        <fullName evidence="5">D-allulose 3-epimerase</fullName>
        <shortName evidence="5">D-AE</shortName>
    </alternativeName>
    <alternativeName>
        <fullName evidence="6">L-ribulose 3-epimerase</fullName>
    </alternativeName>
</protein>